<feature type="chain" id="PRO_0000343090" description="Exportin-T">
    <location>
        <begin position="1"/>
        <end position="1065"/>
    </location>
</feature>
<dbReference type="EMBL" id="AACS02000004">
    <property type="protein sequence ID" value="EAU85429.2"/>
    <property type="molecule type" value="Genomic_DNA"/>
</dbReference>
<dbReference type="RefSeq" id="XP_001836387.2">
    <property type="nucleotide sequence ID" value="XM_001836335.2"/>
</dbReference>
<dbReference type="SMR" id="A8NU66"/>
<dbReference type="FunCoup" id="A8NU66">
    <property type="interactions" value="715"/>
</dbReference>
<dbReference type="STRING" id="240176.A8NU66"/>
<dbReference type="GeneID" id="6012928"/>
<dbReference type="KEGG" id="cci:CC1G_12568"/>
<dbReference type="VEuPathDB" id="FungiDB:CC1G_12568"/>
<dbReference type="eggNOG" id="KOG2021">
    <property type="taxonomic scope" value="Eukaryota"/>
</dbReference>
<dbReference type="HOGENOM" id="CLU_004414_0_0_1"/>
<dbReference type="InParanoid" id="A8NU66"/>
<dbReference type="OMA" id="HEMFLFG"/>
<dbReference type="OrthoDB" id="26399at2759"/>
<dbReference type="Proteomes" id="UP000001861">
    <property type="component" value="Unassembled WGS sequence"/>
</dbReference>
<dbReference type="GO" id="GO:0005737">
    <property type="term" value="C:cytoplasm"/>
    <property type="evidence" value="ECO:0007669"/>
    <property type="project" value="UniProtKB-SubCell"/>
</dbReference>
<dbReference type="GO" id="GO:0016363">
    <property type="term" value="C:nuclear matrix"/>
    <property type="evidence" value="ECO:0007669"/>
    <property type="project" value="TreeGrafter"/>
</dbReference>
<dbReference type="GO" id="GO:0005643">
    <property type="term" value="C:nuclear pore"/>
    <property type="evidence" value="ECO:0007669"/>
    <property type="project" value="TreeGrafter"/>
</dbReference>
<dbReference type="GO" id="GO:0031267">
    <property type="term" value="F:small GTPase binding"/>
    <property type="evidence" value="ECO:0007669"/>
    <property type="project" value="InterPro"/>
</dbReference>
<dbReference type="GO" id="GO:0000049">
    <property type="term" value="F:tRNA binding"/>
    <property type="evidence" value="ECO:0007669"/>
    <property type="project" value="UniProtKB-KW"/>
</dbReference>
<dbReference type="GO" id="GO:0008033">
    <property type="term" value="P:tRNA processing"/>
    <property type="evidence" value="ECO:0007669"/>
    <property type="project" value="UniProtKB-KW"/>
</dbReference>
<dbReference type="GO" id="GO:0071528">
    <property type="term" value="P:tRNA re-export from nucleus"/>
    <property type="evidence" value="ECO:0007669"/>
    <property type="project" value="InterPro"/>
</dbReference>
<dbReference type="Gene3D" id="1.25.10.10">
    <property type="entry name" value="Leucine-rich Repeat Variant"/>
    <property type="match status" value="1"/>
</dbReference>
<dbReference type="InterPro" id="IPR011989">
    <property type="entry name" value="ARM-like"/>
</dbReference>
<dbReference type="InterPro" id="IPR016024">
    <property type="entry name" value="ARM-type_fold"/>
</dbReference>
<dbReference type="InterPro" id="IPR013598">
    <property type="entry name" value="Exportin-1/Importin-b-like"/>
</dbReference>
<dbReference type="InterPro" id="IPR045546">
    <property type="entry name" value="Exportin-T_C"/>
</dbReference>
<dbReference type="InterPro" id="IPR040017">
    <property type="entry name" value="XPOT"/>
</dbReference>
<dbReference type="PANTHER" id="PTHR15952:SF11">
    <property type="entry name" value="EXPORTIN-T"/>
    <property type="match status" value="1"/>
</dbReference>
<dbReference type="PANTHER" id="PTHR15952">
    <property type="entry name" value="EXPORTIN-T/LOS1"/>
    <property type="match status" value="1"/>
</dbReference>
<dbReference type="Pfam" id="PF19282">
    <property type="entry name" value="Exportin-T"/>
    <property type="match status" value="1"/>
</dbReference>
<dbReference type="Pfam" id="PF08389">
    <property type="entry name" value="Xpo1"/>
    <property type="match status" value="1"/>
</dbReference>
<dbReference type="SUPFAM" id="SSF48371">
    <property type="entry name" value="ARM repeat"/>
    <property type="match status" value="1"/>
</dbReference>
<proteinExistence type="inferred from homology"/>
<comment type="function">
    <text evidence="1">tRNA nucleus export receptor which facilitates tRNA translocation across the nuclear pore complex. Involved in pre-tRNA splicing, probably by affecting the interaction of pre-tRNA with splicing endonuclease (By similarity).</text>
</comment>
<comment type="subcellular location">
    <subcellularLocation>
        <location evidence="1">Nucleus</location>
    </subcellularLocation>
    <subcellularLocation>
        <location evidence="1">Cytoplasm</location>
    </subcellularLocation>
    <text evidence="1">Shuttles between the nucleus and the cytoplasm.</text>
</comment>
<comment type="similarity">
    <text evidence="2">Belongs to the exportin family.</text>
</comment>
<sequence length="1065" mass="119480">MDQEIERVVQAIAIASEPSQSTLFQEALNYIQGIQENANETWRLALQIFVATNGDQGRKYPPQARFWALRVLEEFLENKFDPLDPETFQTLQQAMMSYIQSEYVQGPAEANAPFIRNKFSHTLTLLFLCTYIDQWPSFFTDLFSLIQPSSQSSSTGLNRHISLLFFHLVLEISGEVADQMIKTARTWSAVRHARDGRVRDAVRERDAARINEAVLTIVATNVERMNALKEGDGDSQELGNSIELVDWGIRTFGSYVGWIDINLTVTPTTVPLLFKLLADSSLPIRLATSVALLRIVAKGLKEPADKLQLFKVLSLGQVLDALESKTAKQQRERGDDVDEGEESYREALGKLLNVYGLELTKLVEDAPTDDIRSDASAALVDLQPVTLRFLADDYDDTASTVFPLLQAVLGSYKRSRKVSSGPIDDQKRSFLSALLQVILKKMKWDEEAEPDDVDDDDNGEFEKMRKELRTFMDAILTIDQDLVTDEVRKLALQTISAYQSGTSLKWNDAELGVYLVYIFGEINKSGGKGRAAFCQTPAVIDKDKRKVTDYSEFPLTSHGEMLLALVQSGIVSYPNRTVSLQFFETVTRYADFFKVRKECILPALEAMIDKRGLHNENQQFRIRLYYLFYKFIRESRHEIPSQIALTIINSLPDLLSINVQLSEPEDPESDPLTEAVKSPVFESQLYLFETIGILTSTLSKDTEEQGNLLLSIVKPFMEELLANLQLFRAGSQDLVPVVKVHHIIMALGNISKGFPDHPASTTSENYMAPSFKVFAEIAQAILVCLEAMNVIKPIRDATRFAFARILATAGPTVTGYIPPLMNHLLAHFEPSELVDFMNFISLLIHKLQKDMFEVLDKLIAPLHSHITAILSQAASGTDELRWQIETKKAYLNLLVVILNARLEGIFTSERNSASFEALLGSLLRIVEDVSDPPSQKLALTFFGRCVTVWGQPAGSPNPELGGNLPGFERFIYEQIVPTAFGVVALPSFNPKDGQALMVIHEVASLLQTVCKTRGSEAYDYFLSAFLPSKGWPAEMALDFTTKLRDLDSKNFRKYFTELIRASRSS</sequence>
<name>XPOT_COPC7</name>
<gene>
    <name type="primary">LOS1</name>
    <name type="ORF">CC1G_12568</name>
</gene>
<reference key="1">
    <citation type="journal article" date="2010" name="Proc. Natl. Acad. Sci. U.S.A.">
        <title>Insights into evolution of multicellular fungi from the assembled chromosomes of the mushroom Coprinopsis cinerea (Coprinus cinereus).</title>
        <authorList>
            <person name="Stajich J.E."/>
            <person name="Wilke S.K."/>
            <person name="Ahren D."/>
            <person name="Au C.H."/>
            <person name="Birren B.W."/>
            <person name="Borodovsky M."/>
            <person name="Burns C."/>
            <person name="Canbaeck B."/>
            <person name="Casselton L.A."/>
            <person name="Cheng C.K."/>
            <person name="Deng J."/>
            <person name="Dietrich F.S."/>
            <person name="Fargo D.C."/>
            <person name="Farman M.L."/>
            <person name="Gathman A.C."/>
            <person name="Goldberg J."/>
            <person name="Guigo R."/>
            <person name="Hoegger P.J."/>
            <person name="Hooker J.B."/>
            <person name="Huggins A."/>
            <person name="James T.Y."/>
            <person name="Kamada T."/>
            <person name="Kilaru S."/>
            <person name="Kodira C."/>
            <person name="Kuees U."/>
            <person name="Kupfer D."/>
            <person name="Kwan H.S."/>
            <person name="Lomsadze A."/>
            <person name="Li W."/>
            <person name="Lilly W.W."/>
            <person name="Ma L.-J."/>
            <person name="Mackey A.J."/>
            <person name="Manning G."/>
            <person name="Martin F."/>
            <person name="Muraguchi H."/>
            <person name="Natvig D.O."/>
            <person name="Palmerini H."/>
            <person name="Ramesh M.A."/>
            <person name="Rehmeyer C.J."/>
            <person name="Roe B.A."/>
            <person name="Shenoy N."/>
            <person name="Stanke M."/>
            <person name="Ter-Hovhannisyan V."/>
            <person name="Tunlid A."/>
            <person name="Velagapudi R."/>
            <person name="Vision T.J."/>
            <person name="Zeng Q."/>
            <person name="Zolan M.E."/>
            <person name="Pukkila P.J."/>
        </authorList>
    </citation>
    <scope>NUCLEOTIDE SEQUENCE [LARGE SCALE GENOMIC DNA]</scope>
    <source>
        <strain>Okayama-7 / 130 / ATCC MYA-4618 / FGSC 9003</strain>
    </source>
</reference>
<organism>
    <name type="scientific">Coprinopsis cinerea (strain Okayama-7 / 130 / ATCC MYA-4618 / FGSC 9003)</name>
    <name type="common">Inky cap fungus</name>
    <name type="synonym">Hormographiella aspergillata</name>
    <dbReference type="NCBI Taxonomy" id="240176"/>
    <lineage>
        <taxon>Eukaryota</taxon>
        <taxon>Fungi</taxon>
        <taxon>Dikarya</taxon>
        <taxon>Basidiomycota</taxon>
        <taxon>Agaricomycotina</taxon>
        <taxon>Agaricomycetes</taxon>
        <taxon>Agaricomycetidae</taxon>
        <taxon>Agaricales</taxon>
        <taxon>Agaricineae</taxon>
        <taxon>Psathyrellaceae</taxon>
        <taxon>Coprinopsis</taxon>
    </lineage>
</organism>
<keyword id="KW-0963">Cytoplasm</keyword>
<keyword id="KW-0539">Nucleus</keyword>
<keyword id="KW-1185">Reference proteome</keyword>
<keyword id="KW-0694">RNA-binding</keyword>
<keyword id="KW-0813">Transport</keyword>
<keyword id="KW-0819">tRNA processing</keyword>
<keyword id="KW-0820">tRNA-binding</keyword>
<protein>
    <recommendedName>
        <fullName>Exportin-T</fullName>
    </recommendedName>
    <alternativeName>
        <fullName>Exportin(tRNA)</fullName>
    </alternativeName>
    <alternativeName>
        <fullName>Karyopherin-beta</fullName>
    </alternativeName>
    <alternativeName>
        <fullName>tRNA exportin</fullName>
    </alternativeName>
</protein>
<accession>A8NU66</accession>
<evidence type="ECO:0000250" key="1"/>
<evidence type="ECO:0000305" key="2"/>